<keyword id="KW-0933">Apicoplast</keyword>
<keyword id="KW-0251">Elongation factor</keyword>
<keyword id="KW-0342">GTP-binding</keyword>
<keyword id="KW-0378">Hydrolase</keyword>
<keyword id="KW-0460">Magnesium</keyword>
<keyword id="KW-0479">Metal-binding</keyword>
<keyword id="KW-0547">Nucleotide-binding</keyword>
<keyword id="KW-0934">Plastid</keyword>
<keyword id="KW-0648">Protein biosynthesis</keyword>
<accession>Q25820</accession>
<comment type="function">
    <text evidence="2">GTP hydrolase that promotes the GTP-dependent binding of aminoacyl-tRNA to the A-site of ribosomes during protein biosynthesis.</text>
</comment>
<comment type="catalytic activity">
    <reaction evidence="2">
        <text>GTP + H2O = GDP + phosphate + H(+)</text>
        <dbReference type="Rhea" id="RHEA:19669"/>
        <dbReference type="ChEBI" id="CHEBI:15377"/>
        <dbReference type="ChEBI" id="CHEBI:15378"/>
        <dbReference type="ChEBI" id="CHEBI:37565"/>
        <dbReference type="ChEBI" id="CHEBI:43474"/>
        <dbReference type="ChEBI" id="CHEBI:58189"/>
        <dbReference type="EC" id="3.6.5.3"/>
    </reaction>
    <physiologicalReaction direction="left-to-right" evidence="2">
        <dbReference type="Rhea" id="RHEA:19670"/>
    </physiologicalReaction>
</comment>
<comment type="subcellular location">
    <subcellularLocation>
        <location>Plastid</location>
        <location>Apicoplast</location>
    </subcellularLocation>
</comment>
<comment type="similarity">
    <text evidence="3">Belongs to the TRAFAC class translation factor GTPase superfamily. Classic translation factor GTPase family. EF-Tu/EF-1A subfamily.</text>
</comment>
<proteinExistence type="inferred from homology"/>
<sequence>MNNKLFLRNKQHINLGTIGHVDHGKTTLTTAISYLLNLQGLSKKYNYSDIDSAPEEKIRGITINTTHIEYETLTKHCAHIDCPGHSDYIKNMIIGATQMDIAILVISIIDGIMPQTYEHLLLIKQIGIKNIIIFLNKEDLCDDVELIDFIKLEVNELLIKYNFDLNYIHILTGSALNVINIIQKNKDYELIKSNIWIQKLNNLIQIIDNIIIPTRKINDYFLMSIEDVFSITGRGTVVTGKIEQGCINLNDEIEILKFEKSSPNLTTVIGLEMFKKQLTQAQSGDNVGILLRNIQKKDIKRGMILATPNKLKVYKSFIAETYILTKEEGGRHKPFNIGYKPQFFIRTVDVTGEIKNIYLNENVQKVAIPGDKITLHIELKHYIVLTLNMKFSIREGGKTIGAGIITEIKN</sequence>
<evidence type="ECO:0000250" key="1"/>
<evidence type="ECO:0000255" key="2">
    <source>
        <dbReference type="HAMAP-Rule" id="MF_00118"/>
    </source>
</evidence>
<evidence type="ECO:0000305" key="3"/>
<geneLocation type="apicoplast"/>
<name>EFTU_PLAF7</name>
<protein>
    <recommendedName>
        <fullName>Elongation factor Tu, apicoplast</fullName>
        <shortName>EF-Tu</shortName>
        <ecNumber evidence="2">3.6.5.3</ecNumber>
    </recommendedName>
</protein>
<feature type="chain" id="PRO_0000232686" description="Elongation factor Tu, apicoplast">
    <location>
        <begin position="1"/>
        <end position="410"/>
    </location>
</feature>
<feature type="domain" description="tr-type G">
    <location>
        <begin position="10"/>
        <end position="214"/>
    </location>
</feature>
<feature type="region of interest" description="G1" evidence="1">
    <location>
        <begin position="19"/>
        <end position="26"/>
    </location>
</feature>
<feature type="region of interest" description="G2" evidence="1">
    <location>
        <begin position="60"/>
        <end position="64"/>
    </location>
</feature>
<feature type="region of interest" description="G3" evidence="1">
    <location>
        <begin position="81"/>
        <end position="84"/>
    </location>
</feature>
<feature type="region of interest" description="G4" evidence="1">
    <location>
        <begin position="136"/>
        <end position="139"/>
    </location>
</feature>
<feature type="region of interest" description="G5" evidence="1">
    <location>
        <begin position="174"/>
        <end position="176"/>
    </location>
</feature>
<feature type="binding site" evidence="1">
    <location>
        <begin position="19"/>
        <end position="26"/>
    </location>
    <ligand>
        <name>GTP</name>
        <dbReference type="ChEBI" id="CHEBI:37565"/>
    </ligand>
</feature>
<feature type="binding site" evidence="2">
    <location>
        <position position="26"/>
    </location>
    <ligand>
        <name>Mg(2+)</name>
        <dbReference type="ChEBI" id="CHEBI:18420"/>
    </ligand>
</feature>
<feature type="binding site" evidence="1">
    <location>
        <begin position="81"/>
        <end position="85"/>
    </location>
    <ligand>
        <name>GTP</name>
        <dbReference type="ChEBI" id="CHEBI:37565"/>
    </ligand>
</feature>
<feature type="binding site" evidence="1">
    <location>
        <begin position="136"/>
        <end position="139"/>
    </location>
    <ligand>
        <name>GTP</name>
        <dbReference type="ChEBI" id="CHEBI:37565"/>
    </ligand>
</feature>
<dbReference type="EC" id="3.6.5.3" evidence="2"/>
<dbReference type="EMBL" id="X95276">
    <property type="protein sequence ID" value="CAA64593.1"/>
    <property type="molecule type" value="Genomic_DNA"/>
</dbReference>
<dbReference type="EMBL" id="X87630">
    <property type="protein sequence ID" value="CAA60960.1"/>
    <property type="molecule type" value="Genomic_DNA"/>
</dbReference>
<dbReference type="PIR" id="S72277">
    <property type="entry name" value="S72277"/>
</dbReference>
<dbReference type="SMR" id="Q25820"/>
<dbReference type="FunCoup" id="Q25820">
    <property type="interactions" value="1"/>
</dbReference>
<dbReference type="STRING" id="36329.Q25820"/>
<dbReference type="VEuPathDB" id="PlasmoDB:PF3D7_API02900"/>
<dbReference type="InParanoid" id="Q25820"/>
<dbReference type="OrthoDB" id="2067at2759"/>
<dbReference type="PhylomeDB" id="Q25820"/>
<dbReference type="GO" id="GO:0020011">
    <property type="term" value="C:apicoplast"/>
    <property type="evidence" value="ECO:0007669"/>
    <property type="project" value="UniProtKB-SubCell"/>
</dbReference>
<dbReference type="GO" id="GO:0005739">
    <property type="term" value="C:mitochondrion"/>
    <property type="evidence" value="ECO:0000318"/>
    <property type="project" value="GO_Central"/>
</dbReference>
<dbReference type="GO" id="GO:0005525">
    <property type="term" value="F:GTP binding"/>
    <property type="evidence" value="ECO:0007669"/>
    <property type="project" value="UniProtKB-KW"/>
</dbReference>
<dbReference type="GO" id="GO:0003924">
    <property type="term" value="F:GTPase activity"/>
    <property type="evidence" value="ECO:0007669"/>
    <property type="project" value="InterPro"/>
</dbReference>
<dbReference type="GO" id="GO:0003746">
    <property type="term" value="F:translation elongation factor activity"/>
    <property type="evidence" value="ECO:0000318"/>
    <property type="project" value="GO_Central"/>
</dbReference>
<dbReference type="GO" id="GO:0070125">
    <property type="term" value="P:mitochondrial translational elongation"/>
    <property type="evidence" value="ECO:0000318"/>
    <property type="project" value="GO_Central"/>
</dbReference>
<dbReference type="CDD" id="cd03697">
    <property type="entry name" value="EFTU_II"/>
    <property type="match status" value="1"/>
</dbReference>
<dbReference type="CDD" id="cd03707">
    <property type="entry name" value="EFTU_III"/>
    <property type="match status" value="1"/>
</dbReference>
<dbReference type="FunFam" id="2.40.30.10:FF:000001">
    <property type="entry name" value="Elongation factor Tu"/>
    <property type="match status" value="1"/>
</dbReference>
<dbReference type="FunFam" id="3.40.50.300:FF:001554">
    <property type="entry name" value="Translation elongation factor Tu"/>
    <property type="match status" value="1"/>
</dbReference>
<dbReference type="Gene3D" id="3.40.50.300">
    <property type="entry name" value="P-loop containing nucleotide triphosphate hydrolases"/>
    <property type="match status" value="1"/>
</dbReference>
<dbReference type="Gene3D" id="2.40.30.10">
    <property type="entry name" value="Translation factors"/>
    <property type="match status" value="2"/>
</dbReference>
<dbReference type="HAMAP" id="MF_00118_B">
    <property type="entry name" value="EF_Tu_B"/>
    <property type="match status" value="1"/>
</dbReference>
<dbReference type="InterPro" id="IPR050055">
    <property type="entry name" value="EF-Tu_GTPase"/>
</dbReference>
<dbReference type="InterPro" id="IPR004161">
    <property type="entry name" value="EFTu-like_2"/>
</dbReference>
<dbReference type="InterPro" id="IPR033720">
    <property type="entry name" value="EFTU_2"/>
</dbReference>
<dbReference type="InterPro" id="IPR031157">
    <property type="entry name" value="G_TR_CS"/>
</dbReference>
<dbReference type="InterPro" id="IPR027417">
    <property type="entry name" value="P-loop_NTPase"/>
</dbReference>
<dbReference type="InterPro" id="IPR005225">
    <property type="entry name" value="Small_GTP-bd"/>
</dbReference>
<dbReference type="InterPro" id="IPR000795">
    <property type="entry name" value="T_Tr_GTP-bd_dom"/>
</dbReference>
<dbReference type="InterPro" id="IPR009000">
    <property type="entry name" value="Transl_B-barrel_sf"/>
</dbReference>
<dbReference type="InterPro" id="IPR009001">
    <property type="entry name" value="Transl_elong_EF1A/Init_IF2_C"/>
</dbReference>
<dbReference type="InterPro" id="IPR004541">
    <property type="entry name" value="Transl_elong_EFTu/EF1A_bac/org"/>
</dbReference>
<dbReference type="InterPro" id="IPR004160">
    <property type="entry name" value="Transl_elong_EFTu/EF1A_C"/>
</dbReference>
<dbReference type="NCBIfam" id="NF000766">
    <property type="entry name" value="PRK00049.1"/>
    <property type="match status" value="1"/>
</dbReference>
<dbReference type="NCBIfam" id="NF009372">
    <property type="entry name" value="PRK12735.1"/>
    <property type="match status" value="1"/>
</dbReference>
<dbReference type="NCBIfam" id="NF009373">
    <property type="entry name" value="PRK12736.1"/>
    <property type="match status" value="1"/>
</dbReference>
<dbReference type="NCBIfam" id="TIGR00231">
    <property type="entry name" value="small_GTP"/>
    <property type="match status" value="1"/>
</dbReference>
<dbReference type="PANTHER" id="PTHR43721:SF22">
    <property type="entry name" value="ELONGATION FACTOR TU, MITOCHONDRIAL"/>
    <property type="match status" value="1"/>
</dbReference>
<dbReference type="PANTHER" id="PTHR43721">
    <property type="entry name" value="ELONGATION FACTOR TU-RELATED"/>
    <property type="match status" value="1"/>
</dbReference>
<dbReference type="Pfam" id="PF00009">
    <property type="entry name" value="GTP_EFTU"/>
    <property type="match status" value="1"/>
</dbReference>
<dbReference type="Pfam" id="PF03144">
    <property type="entry name" value="GTP_EFTU_D2"/>
    <property type="match status" value="1"/>
</dbReference>
<dbReference type="Pfam" id="PF03143">
    <property type="entry name" value="GTP_EFTU_D3"/>
    <property type="match status" value="1"/>
</dbReference>
<dbReference type="PRINTS" id="PR00315">
    <property type="entry name" value="ELONGATNFCT"/>
</dbReference>
<dbReference type="SUPFAM" id="SSF50465">
    <property type="entry name" value="EF-Tu/eEF-1alpha/eIF2-gamma C-terminal domain"/>
    <property type="match status" value="1"/>
</dbReference>
<dbReference type="SUPFAM" id="SSF52540">
    <property type="entry name" value="P-loop containing nucleoside triphosphate hydrolases"/>
    <property type="match status" value="1"/>
</dbReference>
<dbReference type="SUPFAM" id="SSF50447">
    <property type="entry name" value="Translation proteins"/>
    <property type="match status" value="1"/>
</dbReference>
<dbReference type="PROSITE" id="PS00301">
    <property type="entry name" value="G_TR_1"/>
    <property type="match status" value="1"/>
</dbReference>
<dbReference type="PROSITE" id="PS51722">
    <property type="entry name" value="G_TR_2"/>
    <property type="match status" value="1"/>
</dbReference>
<gene>
    <name type="primary">tufA</name>
</gene>
<reference key="1">
    <citation type="journal article" date="1996" name="J. Mol. Biol.">
        <title>Complete gene map of the plastid-like DNA of the malaria parasite Plasmodium falciparum.</title>
        <authorList>
            <person name="Wilson R.J.M."/>
            <person name="Denny P.W."/>
            <person name="Preiser P.R."/>
            <person name="Rangachari K."/>
            <person name="Roberts K."/>
            <person name="Roy A."/>
            <person name="Whyte A."/>
            <person name="Strath M."/>
            <person name="Moore D.J."/>
            <person name="Moore P.W."/>
            <person name="Williamson D.H."/>
        </authorList>
    </citation>
    <scope>NUCLEOTIDE SEQUENCE [LARGE SCALE GENOMIC DNA]</scope>
    <source>
        <strain>BW/C10</strain>
    </source>
</reference>
<organism>
    <name type="scientific">Plasmodium falciparum (isolate 3D7)</name>
    <dbReference type="NCBI Taxonomy" id="36329"/>
    <lineage>
        <taxon>Eukaryota</taxon>
        <taxon>Sar</taxon>
        <taxon>Alveolata</taxon>
        <taxon>Apicomplexa</taxon>
        <taxon>Aconoidasida</taxon>
        <taxon>Haemosporida</taxon>
        <taxon>Plasmodiidae</taxon>
        <taxon>Plasmodium</taxon>
        <taxon>Plasmodium (Laverania)</taxon>
    </lineage>
</organism>